<proteinExistence type="evidence at transcript level"/>
<evidence type="ECO:0000250" key="1">
    <source>
        <dbReference type="UniProtKB" id="P81058"/>
    </source>
</evidence>
<evidence type="ECO:0000255" key="2"/>
<evidence type="ECO:0000269" key="3">
    <source>
    </source>
</evidence>
<evidence type="ECO:0000303" key="4">
    <source>
    </source>
</evidence>
<evidence type="ECO:0000305" key="5"/>
<evidence type="ECO:0000312" key="6">
    <source>
        <dbReference type="EMBL" id="ADN43391.1"/>
    </source>
</evidence>
<reference key="1">
    <citation type="journal article" date="2012" name="Microbiol. Res.">
        <title>cDNA cloning, characterization and expression analysis of a novel antimicrobial peptide gene penaeidin-3 (Fi-Pen3) from the haemocytes of Indian white shrimp Fenneropenaeus indicus.</title>
        <authorList>
            <person name="Shanthi S."/>
            <person name="Vaseeharan B."/>
        </authorList>
    </citation>
    <scope>NUCLEOTIDE SEQUENCE [MRNA]</scope>
    <scope>TISSUE SPECIFICITY</scope>
    <scope>DEVELOPMENTAL STAGE</scope>
    <scope>INDUCTION</scope>
    <scope>3D-STRUCTURE MODELING</scope>
    <scope>PHYLOGENETIC ANALYSIS</scope>
    <source>
        <tissue evidence="4">Hemocyte</tissue>
    </source>
</reference>
<keyword id="KW-0044">Antibiotic</keyword>
<keyword id="KW-0929">Antimicrobial</keyword>
<keyword id="KW-0147">Chitin-binding</keyword>
<keyword id="KW-1015">Disulfide bond</keyword>
<keyword id="KW-0295">Fungicide</keyword>
<keyword id="KW-0873">Pyrrolidone carboxylic acid</keyword>
<keyword id="KW-0732">Signal</keyword>
<feature type="signal peptide" evidence="1">
    <location>
        <begin position="1"/>
        <end position="19"/>
    </location>
</feature>
<feature type="chain" id="PRO_5003159500" description="Penaeidin-3" evidence="2">
    <location>
        <begin position="20"/>
        <end position="80"/>
    </location>
</feature>
<feature type="modified residue" description="Pyrrolidone carboxylic acid" evidence="1">
    <location>
        <position position="20"/>
    </location>
</feature>
<feature type="disulfide bond" evidence="1">
    <location>
        <begin position="54"/>
        <end position="67"/>
    </location>
</feature>
<feature type="disulfide bond" evidence="1">
    <location>
        <begin position="57"/>
        <end position="74"/>
    </location>
</feature>
<feature type="disulfide bond" evidence="1">
    <location>
        <begin position="68"/>
        <end position="75"/>
    </location>
</feature>
<comment type="function">
    <text evidence="1">Antibacterial and antifungal activity. Presents chitin-binding activity.</text>
</comment>
<comment type="subcellular location">
    <subcellularLocation>
        <location>Cytoplasmic granule</location>
    </subcellularLocation>
    <text evidence="1">Cytoplasmic granules of hemocytes and to a lesser extent in small granules of hemocytes.</text>
</comment>
<comment type="tissue specificity">
    <text evidence="3">Strongly expressed in hemocytes, and to a lesser extent in heart, muscle, gills, intestine and eyestalk. Lowest expression in hepatopancreas.</text>
</comment>
<comment type="developmental stage">
    <text evidence="3">Highest expression at premolt stage and lower expression at postmolt and intermolt stages.</text>
</comment>
<comment type="induction">
    <text evidence="3">Up-regulated in response to V.parahaemolyticys challenge. Highest expression at 6 hours postinjection of the bacterium, then gradually down-regulated upto 48 hours postinjection.</text>
</comment>
<comment type="PTM">
    <text evidence="1">The N-terminus forms pyrrolidone carboxylic acid.</text>
</comment>
<comment type="similarity">
    <text evidence="5">Belongs to the penaeidin family.</text>
</comment>
<organism>
    <name type="scientific">Penaeus indicus</name>
    <name type="common">Indian white prawn</name>
    <name type="synonym">Fenneropenaeus indicus</name>
    <dbReference type="NCBI Taxonomy" id="29960"/>
    <lineage>
        <taxon>Eukaryota</taxon>
        <taxon>Metazoa</taxon>
        <taxon>Ecdysozoa</taxon>
        <taxon>Arthropoda</taxon>
        <taxon>Crustacea</taxon>
        <taxon>Multicrustacea</taxon>
        <taxon>Malacostraca</taxon>
        <taxon>Eumalacostraca</taxon>
        <taxon>Eucarida</taxon>
        <taxon>Decapoda</taxon>
        <taxon>Dendrobranchiata</taxon>
        <taxon>Penaeoidea</taxon>
        <taxon>Penaeidae</taxon>
        <taxon>Penaeus</taxon>
    </lineage>
</organism>
<gene>
    <name evidence="6" type="primary">PEN-3</name>
</gene>
<dbReference type="EMBL" id="HM535650">
    <property type="protein sequence ID" value="ADN43391.1"/>
    <property type="molecule type" value="mRNA"/>
</dbReference>
<dbReference type="GO" id="GO:0005737">
    <property type="term" value="C:cytoplasm"/>
    <property type="evidence" value="ECO:0000250"/>
    <property type="project" value="UniProtKB"/>
</dbReference>
<dbReference type="GO" id="GO:0008061">
    <property type="term" value="F:chitin binding"/>
    <property type="evidence" value="ECO:0000250"/>
    <property type="project" value="UniProtKB"/>
</dbReference>
<dbReference type="GO" id="GO:0042742">
    <property type="term" value="P:defense response to bacterium"/>
    <property type="evidence" value="ECO:0000250"/>
    <property type="project" value="UniProtKB"/>
</dbReference>
<dbReference type="GO" id="GO:0050832">
    <property type="term" value="P:defense response to fungus"/>
    <property type="evidence" value="ECO:0000250"/>
    <property type="project" value="UniProtKB"/>
</dbReference>
<dbReference type="GO" id="GO:0031640">
    <property type="term" value="P:killing of cells of another organism"/>
    <property type="evidence" value="ECO:0007669"/>
    <property type="project" value="UniProtKB-KW"/>
</dbReference>
<dbReference type="GO" id="GO:0022404">
    <property type="term" value="P:molting cycle process"/>
    <property type="evidence" value="ECO:0000270"/>
    <property type="project" value="UniProtKB"/>
</dbReference>
<dbReference type="GO" id="GO:0009617">
    <property type="term" value="P:response to bacterium"/>
    <property type="evidence" value="ECO:0000270"/>
    <property type="project" value="UniProtKB"/>
</dbReference>
<dbReference type="InterPro" id="IPR009226">
    <property type="entry name" value="Penaeidin"/>
</dbReference>
<dbReference type="Pfam" id="PF05927">
    <property type="entry name" value="Penaeidin"/>
    <property type="match status" value="1"/>
</dbReference>
<accession>E2IH92</accession>
<protein>
    <recommendedName>
        <fullName evidence="4 6">Penaeidin-3</fullName>
        <shortName evidence="4">Fi-Pen3</shortName>
    </recommendedName>
    <alternativeName>
        <fullName evidence="4">Antimicrobial peptide penaeidin 3</fullName>
        <shortName evidence="4">AMP penaeidin-3</shortName>
    </alternativeName>
</protein>
<sequence length="80" mass="8483">MRLVVCLVYLVSFALVCQGQGFKGGYTGSYSRAPPYGSRGPISTHPISRPATGCTSCHTITFDKAACCRLFGRCCSALKG</sequence>
<name>PEN3_PENIN</name>